<feature type="chain" id="PRO_1000185659" description="Threonine/serine transporter TdcC">
    <location>
        <begin position="1"/>
        <end position="443"/>
    </location>
</feature>
<feature type="transmembrane region" description="Helical" evidence="1">
    <location>
        <begin position="22"/>
        <end position="42"/>
    </location>
</feature>
<feature type="transmembrane region" description="Helical" evidence="1">
    <location>
        <begin position="44"/>
        <end position="64"/>
    </location>
</feature>
<feature type="transmembrane region" description="Helical" evidence="1">
    <location>
        <begin position="97"/>
        <end position="117"/>
    </location>
</feature>
<feature type="transmembrane region" description="Helical" evidence="1">
    <location>
        <begin position="140"/>
        <end position="160"/>
    </location>
</feature>
<feature type="transmembrane region" description="Helical" evidence="1">
    <location>
        <begin position="163"/>
        <end position="183"/>
    </location>
</feature>
<feature type="transmembrane region" description="Helical" evidence="1">
    <location>
        <begin position="207"/>
        <end position="227"/>
    </location>
</feature>
<feature type="transmembrane region" description="Helical" evidence="1">
    <location>
        <begin position="261"/>
        <end position="281"/>
    </location>
</feature>
<feature type="transmembrane region" description="Helical" evidence="1">
    <location>
        <begin position="311"/>
        <end position="331"/>
    </location>
</feature>
<feature type="transmembrane region" description="Helical" evidence="1">
    <location>
        <begin position="366"/>
        <end position="386"/>
    </location>
</feature>
<feature type="transmembrane region" description="Helical" evidence="1">
    <location>
        <begin position="389"/>
        <end position="409"/>
    </location>
</feature>
<feature type="transmembrane region" description="Helical" evidence="1">
    <location>
        <begin position="423"/>
        <end position="443"/>
    </location>
</feature>
<dbReference type="EMBL" id="CU928162">
    <property type="protein sequence ID" value="CAR09785.1"/>
    <property type="molecule type" value="Genomic_DNA"/>
</dbReference>
<dbReference type="RefSeq" id="WP_000107720.1">
    <property type="nucleotide sequence ID" value="NC_011745.1"/>
</dbReference>
<dbReference type="SMR" id="B7N0B7"/>
<dbReference type="GeneID" id="75205075"/>
<dbReference type="KEGG" id="ecq:ECED1_3781"/>
<dbReference type="HOGENOM" id="CLU_052043_1_1_6"/>
<dbReference type="Proteomes" id="UP000000748">
    <property type="component" value="Chromosome"/>
</dbReference>
<dbReference type="GO" id="GO:0005886">
    <property type="term" value="C:plasma membrane"/>
    <property type="evidence" value="ECO:0007669"/>
    <property type="project" value="UniProtKB-SubCell"/>
</dbReference>
<dbReference type="GO" id="GO:0015194">
    <property type="term" value="F:L-serine transmembrane transporter activity"/>
    <property type="evidence" value="ECO:0007669"/>
    <property type="project" value="InterPro"/>
</dbReference>
<dbReference type="GO" id="GO:0015293">
    <property type="term" value="F:symporter activity"/>
    <property type="evidence" value="ECO:0007669"/>
    <property type="project" value="UniProtKB-UniRule"/>
</dbReference>
<dbReference type="GO" id="GO:0015565">
    <property type="term" value="F:threonine efflux transmembrane transporter activity"/>
    <property type="evidence" value="ECO:0007669"/>
    <property type="project" value="InterPro"/>
</dbReference>
<dbReference type="HAMAP" id="MF_01583">
    <property type="entry name" value="Thr_Ser_transp_TdcC"/>
    <property type="match status" value="1"/>
</dbReference>
<dbReference type="InterPro" id="IPR018227">
    <property type="entry name" value="Amino_acid_transport_2"/>
</dbReference>
<dbReference type="InterPro" id="IPR004694">
    <property type="entry name" value="Hydroxy_aa_transpt"/>
</dbReference>
<dbReference type="InterPro" id="IPR023726">
    <property type="entry name" value="Thr/Ser_transpt_TdcC"/>
</dbReference>
<dbReference type="NCBIfam" id="NF010152">
    <property type="entry name" value="PRK13629.1"/>
    <property type="match status" value="1"/>
</dbReference>
<dbReference type="NCBIfam" id="TIGR00814">
    <property type="entry name" value="stp"/>
    <property type="match status" value="1"/>
</dbReference>
<dbReference type="PANTHER" id="PTHR35334">
    <property type="entry name" value="SERINE TRANSPORTER"/>
    <property type="match status" value="1"/>
</dbReference>
<dbReference type="PANTHER" id="PTHR35334:SF1">
    <property type="entry name" value="THREONINE_SERINE TRANSPORTER TDCC"/>
    <property type="match status" value="1"/>
</dbReference>
<dbReference type="Pfam" id="PF03222">
    <property type="entry name" value="Trp_Tyr_perm"/>
    <property type="match status" value="1"/>
</dbReference>
<name>TDCC_ECO81</name>
<organism>
    <name type="scientific">Escherichia coli O81 (strain ED1a)</name>
    <dbReference type="NCBI Taxonomy" id="585397"/>
    <lineage>
        <taxon>Bacteria</taxon>
        <taxon>Pseudomonadati</taxon>
        <taxon>Pseudomonadota</taxon>
        <taxon>Gammaproteobacteria</taxon>
        <taxon>Enterobacterales</taxon>
        <taxon>Enterobacteriaceae</taxon>
        <taxon>Escherichia</taxon>
    </lineage>
</organism>
<accession>B7N0B7</accession>
<sequence length="443" mass="48893">MSTSDSIVSSQTKQSSWRKSDTTWTLGLFGTAIGAGVLFFPIRAGFGGLIPILLMLVLAYPIAFYCHRALARLCLSGSNPSGNITETVEEHFGKTGGVVITFLYFFAICPLLWIYGVTITNTFMTFWENQLGFAPLNRGFVALFLLLLMAFVIWFGKDLMVKVMSYLVWPFIASLVLISLSLIPYWNSAVIDQVDLGSLSLTGHDGILITVWLGISIMVFSFNFSPIVSSFVVSKREEYEKDFGRDFTERKCSQIISRASMLMVAVVMFFAFSCLFTLSPANMAEAKAQNIPVLSYLANHFASMTGTKTTFAITLEYAASIIALVAIFKSFFGHYLGTLEGLNGLILKFGYKGDKTKVSLGKLNTISMIFIMGSTWVVAYANPNILDLIEAMGAPIIASLLCLLPMYAIRKAPSLAKYRGRLDNVFVTVIGLLTILNIVYKLF</sequence>
<proteinExistence type="inferred from homology"/>
<gene>
    <name evidence="1" type="primary">tdcC</name>
    <name type="ordered locus">ECED1_3781</name>
</gene>
<reference key="1">
    <citation type="journal article" date="2009" name="PLoS Genet.">
        <title>Organised genome dynamics in the Escherichia coli species results in highly diverse adaptive paths.</title>
        <authorList>
            <person name="Touchon M."/>
            <person name="Hoede C."/>
            <person name="Tenaillon O."/>
            <person name="Barbe V."/>
            <person name="Baeriswyl S."/>
            <person name="Bidet P."/>
            <person name="Bingen E."/>
            <person name="Bonacorsi S."/>
            <person name="Bouchier C."/>
            <person name="Bouvet O."/>
            <person name="Calteau A."/>
            <person name="Chiapello H."/>
            <person name="Clermont O."/>
            <person name="Cruveiller S."/>
            <person name="Danchin A."/>
            <person name="Diard M."/>
            <person name="Dossat C."/>
            <person name="Karoui M.E."/>
            <person name="Frapy E."/>
            <person name="Garry L."/>
            <person name="Ghigo J.M."/>
            <person name="Gilles A.M."/>
            <person name="Johnson J."/>
            <person name="Le Bouguenec C."/>
            <person name="Lescat M."/>
            <person name="Mangenot S."/>
            <person name="Martinez-Jehanne V."/>
            <person name="Matic I."/>
            <person name="Nassif X."/>
            <person name="Oztas S."/>
            <person name="Petit M.A."/>
            <person name="Pichon C."/>
            <person name="Rouy Z."/>
            <person name="Ruf C.S."/>
            <person name="Schneider D."/>
            <person name="Tourret J."/>
            <person name="Vacherie B."/>
            <person name="Vallenet D."/>
            <person name="Medigue C."/>
            <person name="Rocha E.P.C."/>
            <person name="Denamur E."/>
        </authorList>
    </citation>
    <scope>NUCLEOTIDE SEQUENCE [LARGE SCALE GENOMIC DNA]</scope>
    <source>
        <strain>ED1a</strain>
    </source>
</reference>
<comment type="function">
    <text evidence="1">Involved in the import of threonine and serine into the cell, with the concomitant import of a proton (symport system).</text>
</comment>
<comment type="catalytic activity">
    <reaction evidence="1">
        <text>L-threonine(in) + H(+)(in) = L-threonine(out) + H(+)(out)</text>
        <dbReference type="Rhea" id="RHEA:28883"/>
        <dbReference type="ChEBI" id="CHEBI:15378"/>
        <dbReference type="ChEBI" id="CHEBI:57926"/>
    </reaction>
    <physiologicalReaction direction="right-to-left" evidence="1">
        <dbReference type="Rhea" id="RHEA:28885"/>
    </physiologicalReaction>
</comment>
<comment type="catalytic activity">
    <reaction evidence="1">
        <text>L-serine(in) + H(+)(in) = L-serine(out) + H(+)(out)</text>
        <dbReference type="Rhea" id="RHEA:28887"/>
        <dbReference type="ChEBI" id="CHEBI:15378"/>
        <dbReference type="ChEBI" id="CHEBI:33384"/>
    </reaction>
    <physiologicalReaction direction="right-to-left" evidence="1">
        <dbReference type="Rhea" id="RHEA:28889"/>
    </physiologicalReaction>
</comment>
<comment type="subcellular location">
    <subcellularLocation>
        <location evidence="1">Cell inner membrane</location>
        <topology evidence="1">Multi-pass membrane protein</topology>
    </subcellularLocation>
</comment>
<comment type="similarity">
    <text evidence="1">Belongs to the amino acid/polyamine transporter 2 family. SdaC/TdcC subfamily.</text>
</comment>
<keyword id="KW-0029">Amino-acid transport</keyword>
<keyword id="KW-0997">Cell inner membrane</keyword>
<keyword id="KW-1003">Cell membrane</keyword>
<keyword id="KW-0472">Membrane</keyword>
<keyword id="KW-0769">Symport</keyword>
<keyword id="KW-0812">Transmembrane</keyword>
<keyword id="KW-1133">Transmembrane helix</keyword>
<keyword id="KW-0813">Transport</keyword>
<evidence type="ECO:0000255" key="1">
    <source>
        <dbReference type="HAMAP-Rule" id="MF_01583"/>
    </source>
</evidence>
<protein>
    <recommendedName>
        <fullName evidence="1">Threonine/serine transporter TdcC</fullName>
    </recommendedName>
    <alternativeName>
        <fullName evidence="1">H(+)/threonine-serine symporter</fullName>
    </alternativeName>
</protein>